<accession>B3H5R0</accession>
<accession>O80820</accession>
<organism evidence="7">
    <name type="scientific">Arabidopsis thaliana</name>
    <name type="common">Mouse-ear cress</name>
    <dbReference type="NCBI Taxonomy" id="3702"/>
    <lineage>
        <taxon>Eukaryota</taxon>
        <taxon>Viridiplantae</taxon>
        <taxon>Streptophyta</taxon>
        <taxon>Embryophyta</taxon>
        <taxon>Tracheophyta</taxon>
        <taxon>Spermatophyta</taxon>
        <taxon>Magnoliopsida</taxon>
        <taxon>eudicotyledons</taxon>
        <taxon>Gunneridae</taxon>
        <taxon>Pentapetalae</taxon>
        <taxon>rosids</taxon>
        <taxon>malvids</taxon>
        <taxon>Brassicales</taxon>
        <taxon>Brassicaceae</taxon>
        <taxon>Camelineae</taxon>
        <taxon>Arabidopsis</taxon>
    </lineage>
</organism>
<comment type="function">
    <text evidence="1">Involved in the coordination between cell elongation and cellulose synthesis by promoting the expression of genes involved in cell elongation and cellulose synthesis. Acts as a regulator of plasmodesmatal permeability. Maybe a glycosyltransferase.</text>
</comment>
<comment type="subcellular location">
    <subcellularLocation>
        <location evidence="1">Secreted</location>
        <location evidence="1">Cell wall</location>
    </subcellularLocation>
    <subcellularLocation>
        <location evidence="1">Cytoplasm</location>
    </subcellularLocation>
    <subcellularLocation>
        <location evidence="1">Cell membrane</location>
    </subcellularLocation>
</comment>
<comment type="similarity">
    <text evidence="4">Belongs to the glycosyltransferase 92 family.</text>
</comment>
<comment type="sequence caution">
    <conflict type="erroneous gene model prediction">
        <sequence resource="EMBL-CDS" id="AAC23730"/>
    </conflict>
</comment>
<protein>
    <recommendedName>
        <fullName evidence="4">Glycosyltransferase-like At2g41451</fullName>
        <ecNumber evidence="4">2.4.1.-</ecNumber>
    </recommendedName>
</protein>
<name>GLYT8_ARATH</name>
<feature type="signal peptide" evidence="2">
    <location>
        <begin position="1"/>
        <end position="23"/>
    </location>
</feature>
<feature type="chain" id="PRO_0000430757" description="Glycosyltransferase-like At2g41451" evidence="2">
    <location>
        <begin position="24"/>
        <end position="451"/>
    </location>
</feature>
<feature type="domain" description="GT92" evidence="2">
    <location>
        <begin position="109"/>
        <end position="345"/>
    </location>
</feature>
<feature type="glycosylation site" description="N-linked (GlcNAc...) asparagine" evidence="3">
    <location>
        <position position="36"/>
    </location>
</feature>
<feature type="glycosylation site" description="N-linked (GlcNAc...) asparagine" evidence="3">
    <location>
        <position position="137"/>
    </location>
</feature>
<feature type="glycosylation site" description="N-linked (GlcNAc...) asparagine" evidence="3">
    <location>
        <position position="168"/>
    </location>
</feature>
<feature type="glycosylation site" description="N-linked (GlcNAc...) asparagine" evidence="3">
    <location>
        <position position="441"/>
    </location>
</feature>
<feature type="glycosylation site" description="N-linked (GlcNAc...) asparagine" evidence="3">
    <location>
        <position position="444"/>
    </location>
</feature>
<evidence type="ECO:0000250" key="1">
    <source>
        <dbReference type="UniProtKB" id="Q9C9Z9"/>
    </source>
</evidence>
<evidence type="ECO:0000255" key="2"/>
<evidence type="ECO:0000255" key="3">
    <source>
        <dbReference type="PROSITE-ProRule" id="PRU00498"/>
    </source>
</evidence>
<evidence type="ECO:0000305" key="4"/>
<evidence type="ECO:0000312" key="5">
    <source>
        <dbReference type="Araport" id="AT2G41451"/>
    </source>
</evidence>
<evidence type="ECO:0000312" key="6">
    <source>
        <dbReference type="EMBL" id="AAC23730.1"/>
    </source>
</evidence>
<evidence type="ECO:0000312" key="7">
    <source>
        <dbReference type="EMBL" id="AEC09983.1"/>
    </source>
</evidence>
<dbReference type="EC" id="2.4.1.-" evidence="4"/>
<dbReference type="EMBL" id="AC004625">
    <property type="protein sequence ID" value="AAC23730.1"/>
    <property type="status" value="ALT_SEQ"/>
    <property type="molecule type" value="Genomic_DNA"/>
</dbReference>
<dbReference type="EMBL" id="CP002685">
    <property type="protein sequence ID" value="AEC09983.1"/>
    <property type="molecule type" value="Genomic_DNA"/>
</dbReference>
<dbReference type="PIR" id="T02440">
    <property type="entry name" value="T02440"/>
</dbReference>
<dbReference type="RefSeq" id="NP_001118499.1">
    <property type="nucleotide sequence ID" value="NM_001125027.2"/>
</dbReference>
<dbReference type="STRING" id="3702.B3H5R0"/>
<dbReference type="GlyGen" id="B3H5R0">
    <property type="glycosylation" value="5 sites"/>
</dbReference>
<dbReference type="PaxDb" id="3702-AT2G41451.1"/>
<dbReference type="ProteomicsDB" id="248533"/>
<dbReference type="EnsemblPlants" id="AT2G41451.1">
    <property type="protein sequence ID" value="AT2G41451.1"/>
    <property type="gene ID" value="AT2G41451"/>
</dbReference>
<dbReference type="GeneID" id="6241352"/>
<dbReference type="Gramene" id="AT2G41451.1">
    <property type="protein sequence ID" value="AT2G41451.1"/>
    <property type="gene ID" value="AT2G41451"/>
</dbReference>
<dbReference type="KEGG" id="ath:AT2G41451"/>
<dbReference type="Araport" id="AT2G41451"/>
<dbReference type="TAIR" id="AT2G41451"/>
<dbReference type="eggNOG" id="ENOG502QPZC">
    <property type="taxonomic scope" value="Eukaryota"/>
</dbReference>
<dbReference type="HOGENOM" id="CLU_032860_0_0_1"/>
<dbReference type="InParanoid" id="B3H5R0"/>
<dbReference type="OMA" id="TRIYEPM"/>
<dbReference type="PhylomeDB" id="B3H5R0"/>
<dbReference type="PRO" id="PR:B3H5R0"/>
<dbReference type="Proteomes" id="UP000006548">
    <property type="component" value="Chromosome 2"/>
</dbReference>
<dbReference type="ExpressionAtlas" id="B3H5R0">
    <property type="expression patterns" value="baseline and differential"/>
</dbReference>
<dbReference type="GO" id="GO:0005737">
    <property type="term" value="C:cytoplasm"/>
    <property type="evidence" value="ECO:0007669"/>
    <property type="project" value="UniProtKB-SubCell"/>
</dbReference>
<dbReference type="GO" id="GO:0005576">
    <property type="term" value="C:extracellular region"/>
    <property type="evidence" value="ECO:0007669"/>
    <property type="project" value="UniProtKB-KW"/>
</dbReference>
<dbReference type="GO" id="GO:0009505">
    <property type="term" value="C:plant-type cell wall"/>
    <property type="evidence" value="ECO:0000250"/>
    <property type="project" value="UniProtKB"/>
</dbReference>
<dbReference type="GO" id="GO:0005886">
    <property type="term" value="C:plasma membrane"/>
    <property type="evidence" value="ECO:0007669"/>
    <property type="project" value="UniProtKB-SubCell"/>
</dbReference>
<dbReference type="GO" id="GO:0016757">
    <property type="term" value="F:glycosyltransferase activity"/>
    <property type="evidence" value="ECO:0007669"/>
    <property type="project" value="UniProtKB-KW"/>
</dbReference>
<dbReference type="GO" id="GO:0030154">
    <property type="term" value="P:cell differentiation"/>
    <property type="evidence" value="ECO:0007669"/>
    <property type="project" value="UniProtKB-KW"/>
</dbReference>
<dbReference type="GO" id="GO:0051301">
    <property type="term" value="P:cell division"/>
    <property type="evidence" value="ECO:0007669"/>
    <property type="project" value="UniProtKB-KW"/>
</dbReference>
<dbReference type="GO" id="GO:0071555">
    <property type="term" value="P:cell wall organization"/>
    <property type="evidence" value="ECO:0007669"/>
    <property type="project" value="UniProtKB-KW"/>
</dbReference>
<dbReference type="GO" id="GO:0030244">
    <property type="term" value="P:cellulose biosynthetic process"/>
    <property type="evidence" value="ECO:0007669"/>
    <property type="project" value="InterPro"/>
</dbReference>
<dbReference type="GO" id="GO:0009737">
    <property type="term" value="P:response to abscisic acid"/>
    <property type="evidence" value="ECO:0007669"/>
    <property type="project" value="InterPro"/>
</dbReference>
<dbReference type="InterPro" id="IPR008166">
    <property type="entry name" value="Glyco_transf_92"/>
</dbReference>
<dbReference type="InterPro" id="IPR044224">
    <property type="entry name" value="KOBITO1-like"/>
</dbReference>
<dbReference type="PANTHER" id="PTHR46701:SF8">
    <property type="entry name" value="GLYCOSYLTRANSFERASE FAMILY 92 PROTEIN"/>
    <property type="match status" value="1"/>
</dbReference>
<dbReference type="PANTHER" id="PTHR46701">
    <property type="entry name" value="GLYCOSYLTRANSFERASE-LIKE KOBITO 1"/>
    <property type="match status" value="1"/>
</dbReference>
<dbReference type="Pfam" id="PF01697">
    <property type="entry name" value="Glyco_transf_92"/>
    <property type="match status" value="1"/>
</dbReference>
<sequence length="451" mass="52259">MASSDSSYSRKFLLITFLPLSLACLAFLLQWRSGVNDSVTQWFDDNYPFPGMATVSEKRSLRSDSSCVSLLGQSRTQAFPYLRDLKLDHKPDLKPRICITTSTSAGLEQTLPWIFYHKVIGVETFYLFVEGTAASPNVSRVLETIPGVNVIYRTRELEEEQAKSRIWNETWLEKFFYKPCNYELFVKQNLNMEMAITMARDAGMDWILHLDTDELVHPSGTREYSLRNLLRDVPADVDEVIFTNYESSVERDDIKEPFTEVSMFKKNFKHLPREVYYGNYKEATRGNPNYFLTYANGKSAARIQDHLRPNGAHRWHNYKTYPNIKELDEAAILHYTYSKFSDLTSRRDRCGCKPTKKDVKRCFMLDFDRAAFIIASTSTSEEMLQWYRERVVWTDDNLILKLLRKGILTRIYAPMVIIQELREAGVFSSVVTSAHMSLSKNRSNSSTSSNY</sequence>
<reference key="1">
    <citation type="journal article" date="1999" name="Nature">
        <title>Sequence and analysis of chromosome 2 of the plant Arabidopsis thaliana.</title>
        <authorList>
            <person name="Lin X."/>
            <person name="Kaul S."/>
            <person name="Rounsley S.D."/>
            <person name="Shea T.P."/>
            <person name="Benito M.-I."/>
            <person name="Town C.D."/>
            <person name="Fujii C.Y."/>
            <person name="Mason T.M."/>
            <person name="Bowman C.L."/>
            <person name="Barnstead M.E."/>
            <person name="Feldblyum T.V."/>
            <person name="Buell C.R."/>
            <person name="Ketchum K.A."/>
            <person name="Lee J.J."/>
            <person name="Ronning C.M."/>
            <person name="Koo H.L."/>
            <person name="Moffat K.S."/>
            <person name="Cronin L.A."/>
            <person name="Shen M."/>
            <person name="Pai G."/>
            <person name="Van Aken S."/>
            <person name="Umayam L."/>
            <person name="Tallon L.J."/>
            <person name="Gill J.E."/>
            <person name="Adams M.D."/>
            <person name="Carrera A.J."/>
            <person name="Creasy T.H."/>
            <person name="Goodman H.M."/>
            <person name="Somerville C.R."/>
            <person name="Copenhaver G.P."/>
            <person name="Preuss D."/>
            <person name="Nierman W.C."/>
            <person name="White O."/>
            <person name="Eisen J.A."/>
            <person name="Salzberg S.L."/>
            <person name="Fraser C.M."/>
            <person name="Venter J.C."/>
        </authorList>
    </citation>
    <scope>NUCLEOTIDE SEQUENCE [LARGE SCALE GENOMIC DNA]</scope>
    <source>
        <strain>cv. Columbia</strain>
    </source>
</reference>
<reference key="2">
    <citation type="journal article" date="2017" name="Plant J.">
        <title>Araport11: a complete reannotation of the Arabidopsis thaliana reference genome.</title>
        <authorList>
            <person name="Cheng C.Y."/>
            <person name="Krishnakumar V."/>
            <person name="Chan A.P."/>
            <person name="Thibaud-Nissen F."/>
            <person name="Schobel S."/>
            <person name="Town C.D."/>
        </authorList>
    </citation>
    <scope>GENOME REANNOTATION</scope>
    <source>
        <strain>cv. Columbia</strain>
    </source>
</reference>
<reference key="3">
    <citation type="journal article" date="2003" name="Plant Mol. Biol.">
        <title>The elongation defective1 mutant of Arabidopsis is impaired in the gene encoding a serine-rich secreted protein.</title>
        <authorList>
            <person name="Lertpiriyapong K."/>
            <person name="Sung Z.R."/>
        </authorList>
    </citation>
    <scope>GENE FAMILY</scope>
    <source>
        <strain>cv. Columbia</strain>
    </source>
</reference>
<reference key="4">
    <citation type="journal article" date="2004" name="Plant Cell">
        <title>The Arabidopsis thaliana ABSCISIC ACID-INSENSITIVE8 encodes a novel protein mediating abscisic acid and sugar responses essential for growth.</title>
        <authorList>
            <person name="Brocard-Gifford I."/>
            <person name="Lynch T.J."/>
            <person name="Garcia M.E."/>
            <person name="Malhotra B."/>
            <person name="Finkelstein R.R."/>
        </authorList>
    </citation>
    <scope>GENE FAMILY</scope>
</reference>
<keyword id="KW-0131">Cell cycle</keyword>
<keyword id="KW-0132">Cell division</keyword>
<keyword id="KW-1003">Cell membrane</keyword>
<keyword id="KW-0134">Cell wall</keyword>
<keyword id="KW-0961">Cell wall biogenesis/degradation</keyword>
<keyword id="KW-0963">Cytoplasm</keyword>
<keyword id="KW-0217">Developmental protein</keyword>
<keyword id="KW-0221">Differentiation</keyword>
<keyword id="KW-0325">Glycoprotein</keyword>
<keyword id="KW-0328">Glycosyltransferase</keyword>
<keyword id="KW-0341">Growth regulation</keyword>
<keyword id="KW-0472">Membrane</keyword>
<keyword id="KW-1185">Reference proteome</keyword>
<keyword id="KW-0964">Secreted</keyword>
<keyword id="KW-0732">Signal</keyword>
<keyword id="KW-0808">Transferase</keyword>
<gene>
    <name evidence="5" type="ordered locus">At2g41451</name>
    <name evidence="6" type="ORF">T26J13</name>
</gene>
<proteinExistence type="inferred from homology"/>